<proteinExistence type="inferred from homology"/>
<protein>
    <recommendedName>
        <fullName evidence="1">dITP/XTP pyrophosphatase</fullName>
        <ecNumber evidence="1">3.6.1.66</ecNumber>
    </recommendedName>
    <alternativeName>
        <fullName evidence="1">Non-canonical purine NTP pyrophosphatase</fullName>
    </alternativeName>
    <alternativeName>
        <fullName evidence="1">Non-standard purine NTP pyrophosphatase</fullName>
    </alternativeName>
    <alternativeName>
        <fullName evidence="1">Nucleoside-triphosphate diphosphatase</fullName>
    </alternativeName>
    <alternativeName>
        <fullName evidence="1">Nucleoside-triphosphate pyrophosphatase</fullName>
        <shortName evidence="1">NTPase</shortName>
    </alternativeName>
</protein>
<reference key="1">
    <citation type="journal article" date="2008" name="J. Biotechnol.">
        <title>The lifestyle of Corynebacterium urealyticum derived from its complete genome sequence established by pyrosequencing.</title>
        <authorList>
            <person name="Tauch A."/>
            <person name="Trost E."/>
            <person name="Tilker A."/>
            <person name="Ludewig U."/>
            <person name="Schneiker S."/>
            <person name="Goesmann A."/>
            <person name="Arnold W."/>
            <person name="Bekel T."/>
            <person name="Brinkrolf K."/>
            <person name="Brune I."/>
            <person name="Goetker S."/>
            <person name="Kalinowski J."/>
            <person name="Kamp P.-B."/>
            <person name="Lobo F.P."/>
            <person name="Viehoever P."/>
            <person name="Weisshaar B."/>
            <person name="Soriano F."/>
            <person name="Droege M."/>
            <person name="Puehler A."/>
        </authorList>
    </citation>
    <scope>NUCLEOTIDE SEQUENCE [LARGE SCALE GENOMIC DNA]</scope>
    <source>
        <strain>ATCC 43042 / DSM 7109</strain>
    </source>
</reference>
<comment type="function">
    <text evidence="1">Pyrophosphatase that catalyzes the hydrolysis of nucleoside triphosphates to their monophosphate derivatives, with a high preference for the non-canonical purine nucleotides XTP (xanthosine triphosphate), dITP (deoxyinosine triphosphate) and ITP. Seems to function as a house-cleaning enzyme that removes non-canonical purine nucleotides from the nucleotide pool, thus preventing their incorporation into DNA/RNA and avoiding chromosomal lesions.</text>
</comment>
<comment type="catalytic activity">
    <reaction evidence="1">
        <text>XTP + H2O = XMP + diphosphate + H(+)</text>
        <dbReference type="Rhea" id="RHEA:28610"/>
        <dbReference type="ChEBI" id="CHEBI:15377"/>
        <dbReference type="ChEBI" id="CHEBI:15378"/>
        <dbReference type="ChEBI" id="CHEBI:33019"/>
        <dbReference type="ChEBI" id="CHEBI:57464"/>
        <dbReference type="ChEBI" id="CHEBI:61314"/>
        <dbReference type="EC" id="3.6.1.66"/>
    </reaction>
</comment>
<comment type="catalytic activity">
    <reaction evidence="1">
        <text>dITP + H2O = dIMP + diphosphate + H(+)</text>
        <dbReference type="Rhea" id="RHEA:28342"/>
        <dbReference type="ChEBI" id="CHEBI:15377"/>
        <dbReference type="ChEBI" id="CHEBI:15378"/>
        <dbReference type="ChEBI" id="CHEBI:33019"/>
        <dbReference type="ChEBI" id="CHEBI:61194"/>
        <dbReference type="ChEBI" id="CHEBI:61382"/>
        <dbReference type="EC" id="3.6.1.66"/>
    </reaction>
</comment>
<comment type="catalytic activity">
    <reaction evidence="1">
        <text>ITP + H2O = IMP + diphosphate + H(+)</text>
        <dbReference type="Rhea" id="RHEA:29399"/>
        <dbReference type="ChEBI" id="CHEBI:15377"/>
        <dbReference type="ChEBI" id="CHEBI:15378"/>
        <dbReference type="ChEBI" id="CHEBI:33019"/>
        <dbReference type="ChEBI" id="CHEBI:58053"/>
        <dbReference type="ChEBI" id="CHEBI:61402"/>
        <dbReference type="EC" id="3.6.1.66"/>
    </reaction>
</comment>
<comment type="cofactor">
    <cofactor evidence="1">
        <name>Mg(2+)</name>
        <dbReference type="ChEBI" id="CHEBI:18420"/>
    </cofactor>
    <text evidence="1">Binds 1 Mg(2+) ion per subunit.</text>
</comment>
<comment type="subunit">
    <text evidence="1">Homodimer.</text>
</comment>
<comment type="similarity">
    <text evidence="1">Belongs to the HAM1 NTPase family.</text>
</comment>
<name>IXTPA_CORU7</name>
<keyword id="KW-0378">Hydrolase</keyword>
<keyword id="KW-0460">Magnesium</keyword>
<keyword id="KW-0479">Metal-binding</keyword>
<keyword id="KW-0546">Nucleotide metabolism</keyword>
<keyword id="KW-0547">Nucleotide-binding</keyword>
<keyword id="KW-1185">Reference proteome</keyword>
<accession>B1VGW8</accession>
<dbReference type="EC" id="3.6.1.66" evidence="1"/>
<dbReference type="EMBL" id="AM942444">
    <property type="protein sequence ID" value="CAQ05425.1"/>
    <property type="molecule type" value="Genomic_DNA"/>
</dbReference>
<dbReference type="RefSeq" id="WP_012360711.1">
    <property type="nucleotide sequence ID" value="NC_010545.1"/>
</dbReference>
<dbReference type="SMR" id="B1VGW8"/>
<dbReference type="STRING" id="504474.cu1465"/>
<dbReference type="GeneID" id="60604242"/>
<dbReference type="KEGG" id="cur:cu1465"/>
<dbReference type="eggNOG" id="COG0127">
    <property type="taxonomic scope" value="Bacteria"/>
</dbReference>
<dbReference type="HOGENOM" id="CLU_082080_0_1_11"/>
<dbReference type="Proteomes" id="UP000001727">
    <property type="component" value="Chromosome"/>
</dbReference>
<dbReference type="GO" id="GO:0005829">
    <property type="term" value="C:cytosol"/>
    <property type="evidence" value="ECO:0007669"/>
    <property type="project" value="TreeGrafter"/>
</dbReference>
<dbReference type="GO" id="GO:0035870">
    <property type="term" value="F:dITP diphosphatase activity"/>
    <property type="evidence" value="ECO:0007669"/>
    <property type="project" value="RHEA"/>
</dbReference>
<dbReference type="GO" id="GO:0036220">
    <property type="term" value="F:ITP diphosphatase activity"/>
    <property type="evidence" value="ECO:0007669"/>
    <property type="project" value="UniProtKB-EC"/>
</dbReference>
<dbReference type="GO" id="GO:0046872">
    <property type="term" value="F:metal ion binding"/>
    <property type="evidence" value="ECO:0007669"/>
    <property type="project" value="UniProtKB-KW"/>
</dbReference>
<dbReference type="GO" id="GO:0000166">
    <property type="term" value="F:nucleotide binding"/>
    <property type="evidence" value="ECO:0007669"/>
    <property type="project" value="UniProtKB-KW"/>
</dbReference>
<dbReference type="GO" id="GO:0017111">
    <property type="term" value="F:ribonucleoside triphosphate phosphatase activity"/>
    <property type="evidence" value="ECO:0007669"/>
    <property type="project" value="InterPro"/>
</dbReference>
<dbReference type="GO" id="GO:0036222">
    <property type="term" value="F:XTP diphosphatase activity"/>
    <property type="evidence" value="ECO:0007669"/>
    <property type="project" value="RHEA"/>
</dbReference>
<dbReference type="GO" id="GO:0009117">
    <property type="term" value="P:nucleotide metabolic process"/>
    <property type="evidence" value="ECO:0007669"/>
    <property type="project" value="UniProtKB-KW"/>
</dbReference>
<dbReference type="GO" id="GO:0009146">
    <property type="term" value="P:purine nucleoside triphosphate catabolic process"/>
    <property type="evidence" value="ECO:0007669"/>
    <property type="project" value="UniProtKB-UniRule"/>
</dbReference>
<dbReference type="CDD" id="cd00515">
    <property type="entry name" value="HAM1"/>
    <property type="match status" value="1"/>
</dbReference>
<dbReference type="FunFam" id="3.90.950.10:FF:000001">
    <property type="entry name" value="dITP/XTP pyrophosphatase"/>
    <property type="match status" value="1"/>
</dbReference>
<dbReference type="Gene3D" id="3.90.950.10">
    <property type="match status" value="1"/>
</dbReference>
<dbReference type="HAMAP" id="MF_01405">
    <property type="entry name" value="Non_canon_purine_NTPase"/>
    <property type="match status" value="1"/>
</dbReference>
<dbReference type="InterPro" id="IPR020922">
    <property type="entry name" value="dITP/XTP_pyrophosphatase"/>
</dbReference>
<dbReference type="InterPro" id="IPR029001">
    <property type="entry name" value="ITPase-like_fam"/>
</dbReference>
<dbReference type="InterPro" id="IPR002637">
    <property type="entry name" value="RdgB/HAM1"/>
</dbReference>
<dbReference type="PANTHER" id="PTHR11067:SF9">
    <property type="entry name" value="INOSINE TRIPHOSPHATE PYROPHOSPHATASE"/>
    <property type="match status" value="1"/>
</dbReference>
<dbReference type="PANTHER" id="PTHR11067">
    <property type="entry name" value="INOSINE TRIPHOSPHATE PYROPHOSPHATASE/HAM1 PROTEIN"/>
    <property type="match status" value="1"/>
</dbReference>
<dbReference type="Pfam" id="PF01725">
    <property type="entry name" value="Ham1p_like"/>
    <property type="match status" value="1"/>
</dbReference>
<dbReference type="SUPFAM" id="SSF52972">
    <property type="entry name" value="ITPase-like"/>
    <property type="match status" value="1"/>
</dbReference>
<feature type="chain" id="PRO_1000145486" description="dITP/XTP pyrophosphatase">
    <location>
        <begin position="1"/>
        <end position="212"/>
    </location>
</feature>
<feature type="region of interest" description="Disordered" evidence="2">
    <location>
        <begin position="164"/>
        <end position="194"/>
    </location>
</feature>
<feature type="compositionally biased region" description="Basic and acidic residues" evidence="2">
    <location>
        <begin position="183"/>
        <end position="192"/>
    </location>
</feature>
<feature type="active site" description="Proton acceptor" evidence="1">
    <location>
        <position position="72"/>
    </location>
</feature>
<feature type="binding site" evidence="1">
    <location>
        <begin position="7"/>
        <end position="12"/>
    </location>
    <ligand>
        <name>substrate</name>
    </ligand>
</feature>
<feature type="binding site" evidence="1">
    <location>
        <position position="72"/>
    </location>
    <ligand>
        <name>Mg(2+)</name>
        <dbReference type="ChEBI" id="CHEBI:18420"/>
    </ligand>
</feature>
<feature type="binding site" evidence="1">
    <location>
        <position position="73"/>
    </location>
    <ligand>
        <name>substrate</name>
    </ligand>
</feature>
<feature type="binding site" evidence="1">
    <location>
        <begin position="163"/>
        <end position="166"/>
    </location>
    <ligand>
        <name>substrate</name>
    </ligand>
</feature>
<feature type="binding site" evidence="1">
    <location>
        <position position="187"/>
    </location>
    <ligand>
        <name>substrate</name>
    </ligand>
</feature>
<feature type="binding site" evidence="1">
    <location>
        <begin position="192"/>
        <end position="193"/>
    </location>
    <ligand>
        <name>substrate</name>
    </ligand>
</feature>
<organism>
    <name type="scientific">Corynebacterium urealyticum (strain ATCC 43042 / DSM 7109)</name>
    <dbReference type="NCBI Taxonomy" id="504474"/>
    <lineage>
        <taxon>Bacteria</taxon>
        <taxon>Bacillati</taxon>
        <taxon>Actinomycetota</taxon>
        <taxon>Actinomycetes</taxon>
        <taxon>Mycobacteriales</taxon>
        <taxon>Corynebacteriaceae</taxon>
        <taxon>Corynebacterium</taxon>
    </lineage>
</organism>
<evidence type="ECO:0000255" key="1">
    <source>
        <dbReference type="HAMAP-Rule" id="MF_01405"/>
    </source>
</evidence>
<evidence type="ECO:0000256" key="2">
    <source>
        <dbReference type="SAM" id="MobiDB-lite"/>
    </source>
</evidence>
<gene>
    <name type="ordered locus">cu1465</name>
</gene>
<sequence>MQVLVASRNKKKLAELQRVLAAANVEGIELLSLADVPEYPETPETGATFEANARIKALDGVRNAGLPTVADDSGLAVDALNGMPGVLSARWCGAHGEDAENNRLLLAQLSDVPDDRRGARFVSSCVLAVPAEIADAADLEPEVAVTGEWEGRILRAEQGTNGFGYDPLFEPAEAPGQSSAELTPERKDELSHRGKALQQLVPALRVLAQSAQ</sequence>